<accession>P48700</accession>
<sequence length="469" mass="51912">MSPQTETKASVGFKAGVKDYKLTYYTPEYETLDTDILAAFRVSPQPGVPPEEAGAAVAAESSTGTWTTVWTDGLTSLDRYKGRCYHIEPVAGEENQYICYVAYPLDLFEEGSVTNMFTSIVGNVFGFKALRALRLEDLRIPVAYVKTFLGPPHGIQVERDKLNKYGRPLLGCTIKPKLGLSAKNYGRAVYECLRGGLDFTKDDENVNSQPFMRWRDRFLFCAEAINKAQAETGEIKGHYLNATAGTCEEMIKRAVFARELGVPIVMHDYLTGGFTANTSLAHYCRDNGLLLHIHRAMHAVIDRQKNHGMHFRVLAKALRLSGGDHIHAGTVVGKLEGEREITLGFVDLLRDDFTEKDRSRGIYFTQSWVSTPGVLPVASGGIHVWHMPALTEIFGDDSVLQFGGGTLGHPWGNAPGAVANRVALEACVQARNEGRDLAREGNTIIREACKWSPELAAACEVWKEIKFEF</sequence>
<name>RBL_DIACA</name>
<geneLocation type="chloroplast"/>
<organism>
    <name type="scientific">Dianthus caryophyllus</name>
    <name type="common">Carnation</name>
    <name type="synonym">Clove pink</name>
    <dbReference type="NCBI Taxonomy" id="3570"/>
    <lineage>
        <taxon>Eukaryota</taxon>
        <taxon>Viridiplantae</taxon>
        <taxon>Streptophyta</taxon>
        <taxon>Embryophyta</taxon>
        <taxon>Tracheophyta</taxon>
        <taxon>Spermatophyta</taxon>
        <taxon>Magnoliopsida</taxon>
        <taxon>eudicotyledons</taxon>
        <taxon>Gunneridae</taxon>
        <taxon>Pentapetalae</taxon>
        <taxon>Caryophyllales</taxon>
        <taxon>Caryophyllaceae</taxon>
        <taxon>Caryophylleae</taxon>
        <taxon>Dianthus</taxon>
    </lineage>
</organism>
<comment type="function">
    <text evidence="1">RuBisCO catalyzes two reactions: the carboxylation of D-ribulose 1,5-bisphosphate, the primary event in carbon dioxide fixation, as well as the oxidative fragmentation of the pentose substrate in the photorespiration process. Both reactions occur simultaneously and in competition at the same active site.</text>
</comment>
<comment type="catalytic activity">
    <reaction evidence="1">
        <text>2 (2R)-3-phosphoglycerate + 2 H(+) = D-ribulose 1,5-bisphosphate + CO2 + H2O</text>
        <dbReference type="Rhea" id="RHEA:23124"/>
        <dbReference type="ChEBI" id="CHEBI:15377"/>
        <dbReference type="ChEBI" id="CHEBI:15378"/>
        <dbReference type="ChEBI" id="CHEBI:16526"/>
        <dbReference type="ChEBI" id="CHEBI:57870"/>
        <dbReference type="ChEBI" id="CHEBI:58272"/>
        <dbReference type="EC" id="4.1.1.39"/>
    </reaction>
</comment>
<comment type="catalytic activity">
    <reaction evidence="1">
        <text>D-ribulose 1,5-bisphosphate + O2 = 2-phosphoglycolate + (2R)-3-phosphoglycerate + 2 H(+)</text>
        <dbReference type="Rhea" id="RHEA:36631"/>
        <dbReference type="ChEBI" id="CHEBI:15378"/>
        <dbReference type="ChEBI" id="CHEBI:15379"/>
        <dbReference type="ChEBI" id="CHEBI:57870"/>
        <dbReference type="ChEBI" id="CHEBI:58033"/>
        <dbReference type="ChEBI" id="CHEBI:58272"/>
    </reaction>
</comment>
<comment type="cofactor">
    <cofactor evidence="1">
        <name>Mg(2+)</name>
        <dbReference type="ChEBI" id="CHEBI:18420"/>
    </cofactor>
    <text evidence="1">Binds 1 Mg(2+) ion per subunit.</text>
</comment>
<comment type="subunit">
    <text evidence="1">Heterohexadecamer of 8 large chains and 8 small chains; disulfide-linked. The disulfide link is formed within the large subunit homodimers.</text>
</comment>
<comment type="subcellular location">
    <subcellularLocation>
        <location>Plastid</location>
        <location>Chloroplast</location>
    </subcellularLocation>
</comment>
<comment type="PTM">
    <text evidence="1">The disulfide bond which can form in the large chain dimeric partners within the hexadecamer appears to be associated with oxidative stress and protein turnover.</text>
</comment>
<comment type="miscellaneous">
    <text evidence="1">The basic functional RuBisCO is composed of a large chain homodimer in a 'head-to-tail' conformation. In form I RuBisCO this homodimer is arranged in a barrel-like tetramer with the small subunits forming a tetrameric 'cap' on each end of the 'barrel'.</text>
</comment>
<comment type="similarity">
    <text evidence="1">Belongs to the RuBisCO large chain family. Type I subfamily.</text>
</comment>
<reference key="1">
    <citation type="submission" date="1992-01" db="EMBL/GenBank/DDBJ databases">
        <authorList>
            <person name="Giannasi D.E."/>
            <person name="Zurawski G."/>
            <person name="Learn G.H."/>
            <person name="Clegg M.T."/>
        </authorList>
    </citation>
    <scope>NUCLEOTIDE SEQUENCE [GENOMIC DNA]</scope>
</reference>
<protein>
    <recommendedName>
        <fullName evidence="1">Ribulose bisphosphate carboxylase large chain</fullName>
        <shortName evidence="1">RuBisCO large subunit</shortName>
        <ecNumber evidence="1">4.1.1.39</ecNumber>
    </recommendedName>
</protein>
<dbReference type="EC" id="4.1.1.39" evidence="1"/>
<dbReference type="EMBL" id="M77699">
    <property type="protein sequence ID" value="AAB01598.1"/>
    <property type="molecule type" value="Genomic_DNA"/>
</dbReference>
<dbReference type="SMR" id="P48700"/>
<dbReference type="GO" id="GO:0009507">
    <property type="term" value="C:chloroplast"/>
    <property type="evidence" value="ECO:0007669"/>
    <property type="project" value="UniProtKB-SubCell"/>
</dbReference>
<dbReference type="GO" id="GO:0000287">
    <property type="term" value="F:magnesium ion binding"/>
    <property type="evidence" value="ECO:0007669"/>
    <property type="project" value="InterPro"/>
</dbReference>
<dbReference type="GO" id="GO:0004497">
    <property type="term" value="F:monooxygenase activity"/>
    <property type="evidence" value="ECO:0007669"/>
    <property type="project" value="UniProtKB-KW"/>
</dbReference>
<dbReference type="GO" id="GO:0016984">
    <property type="term" value="F:ribulose-bisphosphate carboxylase activity"/>
    <property type="evidence" value="ECO:0007669"/>
    <property type="project" value="UniProtKB-EC"/>
</dbReference>
<dbReference type="GO" id="GO:0009853">
    <property type="term" value="P:photorespiration"/>
    <property type="evidence" value="ECO:0007669"/>
    <property type="project" value="UniProtKB-KW"/>
</dbReference>
<dbReference type="GO" id="GO:0019253">
    <property type="term" value="P:reductive pentose-phosphate cycle"/>
    <property type="evidence" value="ECO:0007669"/>
    <property type="project" value="UniProtKB-KW"/>
</dbReference>
<dbReference type="CDD" id="cd08212">
    <property type="entry name" value="RuBisCO_large_I"/>
    <property type="match status" value="1"/>
</dbReference>
<dbReference type="FunFam" id="3.20.20.110:FF:000001">
    <property type="entry name" value="Ribulose bisphosphate carboxylase large chain"/>
    <property type="match status" value="1"/>
</dbReference>
<dbReference type="FunFam" id="3.30.70.150:FF:000001">
    <property type="entry name" value="Ribulose bisphosphate carboxylase large chain"/>
    <property type="match status" value="1"/>
</dbReference>
<dbReference type="Gene3D" id="3.20.20.110">
    <property type="entry name" value="Ribulose bisphosphate carboxylase, large subunit, C-terminal domain"/>
    <property type="match status" value="1"/>
</dbReference>
<dbReference type="Gene3D" id="3.30.70.150">
    <property type="entry name" value="RuBisCO large subunit, N-terminal domain"/>
    <property type="match status" value="1"/>
</dbReference>
<dbReference type="HAMAP" id="MF_01338">
    <property type="entry name" value="RuBisCO_L_type1"/>
    <property type="match status" value="1"/>
</dbReference>
<dbReference type="InterPro" id="IPR033966">
    <property type="entry name" value="RuBisCO"/>
</dbReference>
<dbReference type="InterPro" id="IPR020878">
    <property type="entry name" value="RuBisCo_large_chain_AS"/>
</dbReference>
<dbReference type="InterPro" id="IPR000685">
    <property type="entry name" value="RuBisCO_lsu_C"/>
</dbReference>
<dbReference type="InterPro" id="IPR036376">
    <property type="entry name" value="RuBisCO_lsu_C_sf"/>
</dbReference>
<dbReference type="InterPro" id="IPR017443">
    <property type="entry name" value="RuBisCO_lsu_fd_N"/>
</dbReference>
<dbReference type="InterPro" id="IPR036422">
    <property type="entry name" value="RuBisCO_lsu_N_sf"/>
</dbReference>
<dbReference type="InterPro" id="IPR020888">
    <property type="entry name" value="RuBisCO_lsuI"/>
</dbReference>
<dbReference type="NCBIfam" id="NF003252">
    <property type="entry name" value="PRK04208.1"/>
    <property type="match status" value="1"/>
</dbReference>
<dbReference type="PANTHER" id="PTHR42704">
    <property type="entry name" value="RIBULOSE BISPHOSPHATE CARBOXYLASE"/>
    <property type="match status" value="1"/>
</dbReference>
<dbReference type="PANTHER" id="PTHR42704:SF15">
    <property type="entry name" value="RIBULOSE BISPHOSPHATE CARBOXYLASE LARGE CHAIN"/>
    <property type="match status" value="1"/>
</dbReference>
<dbReference type="Pfam" id="PF00016">
    <property type="entry name" value="RuBisCO_large"/>
    <property type="match status" value="1"/>
</dbReference>
<dbReference type="Pfam" id="PF02788">
    <property type="entry name" value="RuBisCO_large_N"/>
    <property type="match status" value="1"/>
</dbReference>
<dbReference type="SFLD" id="SFLDG01052">
    <property type="entry name" value="RuBisCO"/>
    <property type="match status" value="1"/>
</dbReference>
<dbReference type="SFLD" id="SFLDS00014">
    <property type="entry name" value="RuBisCO"/>
    <property type="match status" value="1"/>
</dbReference>
<dbReference type="SFLD" id="SFLDG00301">
    <property type="entry name" value="RuBisCO-like_proteins"/>
    <property type="match status" value="1"/>
</dbReference>
<dbReference type="SUPFAM" id="SSF51649">
    <property type="entry name" value="RuBisCo, C-terminal domain"/>
    <property type="match status" value="1"/>
</dbReference>
<dbReference type="SUPFAM" id="SSF54966">
    <property type="entry name" value="RuBisCO, large subunit, small (N-terminal) domain"/>
    <property type="match status" value="1"/>
</dbReference>
<dbReference type="PROSITE" id="PS00157">
    <property type="entry name" value="RUBISCO_LARGE"/>
    <property type="match status" value="1"/>
</dbReference>
<keyword id="KW-0007">Acetylation</keyword>
<keyword id="KW-0113">Calvin cycle</keyword>
<keyword id="KW-0120">Carbon dioxide fixation</keyword>
<keyword id="KW-0150">Chloroplast</keyword>
<keyword id="KW-1015">Disulfide bond</keyword>
<keyword id="KW-0456">Lyase</keyword>
<keyword id="KW-0460">Magnesium</keyword>
<keyword id="KW-0479">Metal-binding</keyword>
<keyword id="KW-0488">Methylation</keyword>
<keyword id="KW-0503">Monooxygenase</keyword>
<keyword id="KW-0560">Oxidoreductase</keyword>
<keyword id="KW-0601">Photorespiration</keyword>
<keyword id="KW-0602">Photosynthesis</keyword>
<keyword id="KW-0934">Plastid</keyword>
<proteinExistence type="inferred from homology"/>
<gene>
    <name evidence="1" type="primary">rbcL</name>
</gene>
<feature type="propeptide" id="PRO_0000031199" evidence="1">
    <location>
        <begin position="1"/>
        <end position="2"/>
    </location>
</feature>
<feature type="chain" id="PRO_0000031200" description="Ribulose bisphosphate carboxylase large chain">
    <location>
        <begin position="3"/>
        <end position="469" status="greater than"/>
    </location>
</feature>
<feature type="active site" description="Proton acceptor" evidence="1">
    <location>
        <position position="175"/>
    </location>
</feature>
<feature type="active site" description="Proton acceptor" evidence="1">
    <location>
        <position position="294"/>
    </location>
</feature>
<feature type="binding site" description="in homodimeric partner" evidence="1">
    <location>
        <position position="123"/>
    </location>
    <ligand>
        <name>substrate</name>
    </ligand>
</feature>
<feature type="binding site" evidence="1">
    <location>
        <position position="173"/>
    </location>
    <ligand>
        <name>substrate</name>
    </ligand>
</feature>
<feature type="binding site" evidence="1">
    <location>
        <position position="177"/>
    </location>
    <ligand>
        <name>substrate</name>
    </ligand>
</feature>
<feature type="binding site" description="via carbamate group" evidence="1">
    <location>
        <position position="201"/>
    </location>
    <ligand>
        <name>Mg(2+)</name>
        <dbReference type="ChEBI" id="CHEBI:18420"/>
    </ligand>
</feature>
<feature type="binding site" evidence="1">
    <location>
        <position position="203"/>
    </location>
    <ligand>
        <name>Mg(2+)</name>
        <dbReference type="ChEBI" id="CHEBI:18420"/>
    </ligand>
</feature>
<feature type="binding site" evidence="1">
    <location>
        <position position="204"/>
    </location>
    <ligand>
        <name>Mg(2+)</name>
        <dbReference type="ChEBI" id="CHEBI:18420"/>
    </ligand>
</feature>
<feature type="binding site" evidence="1">
    <location>
        <position position="295"/>
    </location>
    <ligand>
        <name>substrate</name>
    </ligand>
</feature>
<feature type="binding site" evidence="1">
    <location>
        <position position="327"/>
    </location>
    <ligand>
        <name>substrate</name>
    </ligand>
</feature>
<feature type="binding site" evidence="1">
    <location>
        <position position="379"/>
    </location>
    <ligand>
        <name>substrate</name>
    </ligand>
</feature>
<feature type="site" description="Transition state stabilizer" evidence="1">
    <location>
        <position position="334"/>
    </location>
</feature>
<feature type="modified residue" description="N-acetylproline" evidence="1">
    <location>
        <position position="3"/>
    </location>
</feature>
<feature type="modified residue" description="N6,N6,N6-trimethyllysine" evidence="1">
    <location>
        <position position="14"/>
    </location>
</feature>
<feature type="modified residue" description="N6-carboxylysine" evidence="1">
    <location>
        <position position="201"/>
    </location>
</feature>
<feature type="disulfide bond" description="Interchain; in linked form" evidence="1">
    <location>
        <position position="247"/>
    </location>
</feature>
<feature type="non-terminal residue">
    <location>
        <position position="469"/>
    </location>
</feature>
<evidence type="ECO:0000255" key="1">
    <source>
        <dbReference type="HAMAP-Rule" id="MF_01338"/>
    </source>
</evidence>